<keyword id="KW-0597">Phosphoprotein</keyword>
<keyword id="KW-1185">Reference proteome</keyword>
<keyword id="KW-0677">Repeat</keyword>
<reference key="1">
    <citation type="journal article" date="2000" name="Biochim. Biophys. Acta">
        <title>Isolation and characterization of isoforms of HspBP1, inhibitors of Hsp70.</title>
        <authorList>
            <person name="Guerriero V. Jr."/>
            <person name="Raynes D.A."/>
        </authorList>
    </citation>
    <scope>NUCLEOTIDE SEQUENCE [MRNA]</scope>
    <scope>FUNCTION</scope>
    <scope>TISSUE SPECIFICITY</scope>
</reference>
<reference key="2">
    <citation type="journal article" date="2004" name="Genome Res.">
        <title>The status, quality, and expansion of the NIH full-length cDNA project: the Mammalian Gene Collection (MGC).</title>
        <authorList>
            <consortium name="The MGC Project Team"/>
        </authorList>
    </citation>
    <scope>NUCLEOTIDE SEQUENCE [LARGE SCALE MRNA]</scope>
    <source>
        <tissue>Heart</tissue>
    </source>
</reference>
<reference key="3">
    <citation type="journal article" date="2012" name="Nat. Commun.">
        <title>Quantitative maps of protein phosphorylation sites across 14 different rat organs and tissues.</title>
        <authorList>
            <person name="Lundby A."/>
            <person name="Secher A."/>
            <person name="Lage K."/>
            <person name="Nordsborg N.B."/>
            <person name="Dmytriyev A."/>
            <person name="Lundby C."/>
            <person name="Olsen J.V."/>
        </authorList>
    </citation>
    <scope>PHOSPHORYLATION [LARGE SCALE ANALYSIS] AT SER-349</scope>
    <scope>IDENTIFICATION BY MASS SPECTROMETRY [LARGE SCALE ANALYSIS]</scope>
</reference>
<evidence type="ECO:0000250" key="1"/>
<evidence type="ECO:0000250" key="2">
    <source>
        <dbReference type="UniProtKB" id="Q9NZL4"/>
    </source>
</evidence>
<evidence type="ECO:0000256" key="3">
    <source>
        <dbReference type="SAM" id="MobiDB-lite"/>
    </source>
</evidence>
<evidence type="ECO:0000269" key="4">
    <source>
    </source>
</evidence>
<evidence type="ECO:0000305" key="5"/>
<evidence type="ECO:0007744" key="6">
    <source>
    </source>
</evidence>
<organism>
    <name type="scientific">Rattus norvegicus</name>
    <name type="common">Rat</name>
    <dbReference type="NCBI Taxonomy" id="10116"/>
    <lineage>
        <taxon>Eukaryota</taxon>
        <taxon>Metazoa</taxon>
        <taxon>Chordata</taxon>
        <taxon>Craniata</taxon>
        <taxon>Vertebrata</taxon>
        <taxon>Euteleostomi</taxon>
        <taxon>Mammalia</taxon>
        <taxon>Eutheria</taxon>
        <taxon>Euarchontoglires</taxon>
        <taxon>Glires</taxon>
        <taxon>Rodentia</taxon>
        <taxon>Myomorpha</taxon>
        <taxon>Muroidea</taxon>
        <taxon>Muridae</taxon>
        <taxon>Murinae</taxon>
        <taxon>Rattus</taxon>
    </lineage>
</organism>
<protein>
    <recommendedName>
        <fullName>Hsp70-binding protein 1</fullName>
        <shortName>HspBP1</shortName>
    </recommendedName>
    <alternativeName>
        <fullName>Heat shock protein-binding protein 1</fullName>
    </alternativeName>
    <alternativeName>
        <fullName>Hsp70-interacting protein 1</fullName>
    </alternativeName>
</protein>
<accession>Q6IMX7</accession>
<accession>Q9JLF4</accession>
<gene>
    <name type="primary">Hspbp1</name>
    <name type="synonym">Hspbp</name>
</gene>
<sequence length="357" mass="39191">MADKGSGGSRLPLALPPASQGCSSGSSGSSAGGSGNPRLPRNLQGLLQMAITAGSEEPDPPPEPMSEERRQWLQEAMSAAFRGQREEVEQMKNCLRVLSQATPPTAGEAELATDQQEREGALELLADLCENMDNAADFCQLSGMHLLVGRYLEAGAAGLRWRAAQLIGTCSQNVAAIQEQVLGLGALRKLLRLLDRDSCDTVRVKALFAISCLVREQEAGLLQFLRLDGFSVLMRAMQQQVQKLKVKSAFLLQNLLVGHPEHKGTLCSMGMVQQLVALVRTEHSPFHEHVLGALCSLVTDFPQGVRECREPELGLEELLRHRCQLLQQHEEYQEELEFCEKLLQTCFSSPTDDSMDR</sequence>
<name>HPBP1_RAT</name>
<feature type="chain" id="PRO_0000084038" description="Hsp70-binding protein 1">
    <location>
        <begin position="1"/>
        <end position="357"/>
    </location>
</feature>
<feature type="repeat" description="ARM 1">
    <location>
        <begin position="130"/>
        <end position="172"/>
    </location>
</feature>
<feature type="repeat" description="ARM 2">
    <location>
        <begin position="175"/>
        <end position="215"/>
    </location>
</feature>
<feature type="repeat" description="ARM 3">
    <location>
        <begin position="218"/>
        <end position="257"/>
    </location>
</feature>
<feature type="repeat" description="ARM 4">
    <location>
        <begin position="260"/>
        <end position="299"/>
    </location>
</feature>
<feature type="region of interest" description="Disordered" evidence="3">
    <location>
        <begin position="1"/>
        <end position="69"/>
    </location>
</feature>
<feature type="compositionally biased region" description="Low complexity" evidence="3">
    <location>
        <begin position="19"/>
        <end position="29"/>
    </location>
</feature>
<feature type="modified residue" description="Phosphoserine" evidence="6">
    <location>
        <position position="349"/>
    </location>
</feature>
<feature type="modified residue" description="Phosphoserine" evidence="2">
    <location>
        <position position="354"/>
    </location>
</feature>
<feature type="sequence conflict" description="In Ref. 1; AAF35834." evidence="5" ref="1">
    <original>K</original>
    <variation>N</variation>
    <location>
        <position position="205"/>
    </location>
</feature>
<proteinExistence type="evidence at protein level"/>
<comment type="function">
    <text evidence="1 4">Inhibits HSPA1A chaperone activity by changing the conformation of the ATP-binding domain of HSPA1A and interfering with ATP binding. Interferes with ubiquitination mediated by STUB1 and inhibits chaperone-assisted degradation of target proteins (By similarity).</text>
</comment>
<comment type="subunit">
    <text evidence="1">Interacts with the ATP-binding domain of HSPA1A. Detected in a ternary complex containing STUB1, HSPA1A and HSPBP1 (By similarity). Interacts with PGLYRP1; this interaction blocks the cytotoxic activity of the PGLYRP1-HSPA1A complex (By similarity).</text>
</comment>
<comment type="tissue specificity">
    <text evidence="4">Ubiquitous.</text>
</comment>
<dbReference type="EMBL" id="AF187860">
    <property type="protein sequence ID" value="AAF35834.1"/>
    <property type="molecule type" value="mRNA"/>
</dbReference>
<dbReference type="EMBL" id="BC072541">
    <property type="protein sequence ID" value="AAH72541.1"/>
    <property type="molecule type" value="mRNA"/>
</dbReference>
<dbReference type="RefSeq" id="NP_640354.1">
    <property type="nucleotide sequence ID" value="NM_139261.1"/>
</dbReference>
<dbReference type="RefSeq" id="XP_006228310.1">
    <property type="nucleotide sequence ID" value="XM_006228248.2"/>
</dbReference>
<dbReference type="RefSeq" id="XP_006228311.1">
    <property type="nucleotide sequence ID" value="XM_006228249.2"/>
</dbReference>
<dbReference type="RefSeq" id="XP_006228312.1">
    <property type="nucleotide sequence ID" value="XM_006228250.5"/>
</dbReference>
<dbReference type="RefSeq" id="XP_063137013.1">
    <property type="nucleotide sequence ID" value="XM_063280943.1"/>
</dbReference>
<dbReference type="SMR" id="Q6IMX7"/>
<dbReference type="FunCoup" id="Q6IMX7">
    <property type="interactions" value="2490"/>
</dbReference>
<dbReference type="IntAct" id="Q6IMX7">
    <property type="interactions" value="1"/>
</dbReference>
<dbReference type="STRING" id="10116.ENSRNOP00000024251"/>
<dbReference type="iPTMnet" id="Q6IMX7"/>
<dbReference type="PhosphoSitePlus" id="Q6IMX7"/>
<dbReference type="jPOST" id="Q6IMX7"/>
<dbReference type="PaxDb" id="10116-ENSRNOP00000024251"/>
<dbReference type="Ensembl" id="ENSRNOT00000024251.6">
    <property type="protein sequence ID" value="ENSRNOP00000024251.3"/>
    <property type="gene ID" value="ENSRNOG00000017795.6"/>
</dbReference>
<dbReference type="GeneID" id="246146"/>
<dbReference type="KEGG" id="rno:246146"/>
<dbReference type="UCSC" id="RGD:628677">
    <property type="organism name" value="rat"/>
</dbReference>
<dbReference type="AGR" id="RGD:628677"/>
<dbReference type="CTD" id="23640"/>
<dbReference type="RGD" id="628677">
    <property type="gene designation" value="Hspbp1"/>
</dbReference>
<dbReference type="eggNOG" id="KOG2160">
    <property type="taxonomic scope" value="Eukaryota"/>
</dbReference>
<dbReference type="GeneTree" id="ENSGT00940000153909"/>
<dbReference type="HOGENOM" id="CLU_049387_0_1_1"/>
<dbReference type="InParanoid" id="Q6IMX7"/>
<dbReference type="OMA" id="CHVQSGL"/>
<dbReference type="OrthoDB" id="10250458at2759"/>
<dbReference type="PhylomeDB" id="Q6IMX7"/>
<dbReference type="TreeFam" id="TF324307"/>
<dbReference type="PRO" id="PR:Q6IMX7"/>
<dbReference type="Proteomes" id="UP000002494">
    <property type="component" value="Chromosome 1"/>
</dbReference>
<dbReference type="Bgee" id="ENSRNOG00000017795">
    <property type="expression patterns" value="Expressed in testis and 19 other cell types or tissues"/>
</dbReference>
<dbReference type="GO" id="GO:0005783">
    <property type="term" value="C:endoplasmic reticulum"/>
    <property type="evidence" value="ECO:0000318"/>
    <property type="project" value="GO_Central"/>
</dbReference>
<dbReference type="GO" id="GO:0005615">
    <property type="term" value="C:extracellular space"/>
    <property type="evidence" value="ECO:0000266"/>
    <property type="project" value="RGD"/>
</dbReference>
<dbReference type="GO" id="GO:0000774">
    <property type="term" value="F:adenyl-nucleotide exchange factor activity"/>
    <property type="evidence" value="ECO:0000318"/>
    <property type="project" value="GO_Central"/>
</dbReference>
<dbReference type="GO" id="GO:0140313">
    <property type="term" value="F:molecular sequestering activity"/>
    <property type="evidence" value="ECO:0000266"/>
    <property type="project" value="RGD"/>
</dbReference>
<dbReference type="GO" id="GO:0031625">
    <property type="term" value="F:ubiquitin protein ligase binding"/>
    <property type="evidence" value="ECO:0000266"/>
    <property type="project" value="RGD"/>
</dbReference>
<dbReference type="GO" id="GO:0032436">
    <property type="term" value="P:positive regulation of proteasomal ubiquitin-dependent protein catabolic process"/>
    <property type="evidence" value="ECO:0000266"/>
    <property type="project" value="RGD"/>
</dbReference>
<dbReference type="GO" id="GO:0031398">
    <property type="term" value="P:positive regulation of protein ubiquitination"/>
    <property type="evidence" value="ECO:0000266"/>
    <property type="project" value="RGD"/>
</dbReference>
<dbReference type="FunFam" id="1.25.10.10:FF:000178">
    <property type="entry name" value="hsp70-binding protein 1 isoform X1"/>
    <property type="match status" value="1"/>
</dbReference>
<dbReference type="Gene3D" id="1.25.10.10">
    <property type="entry name" value="Leucine-rich Repeat Variant"/>
    <property type="match status" value="1"/>
</dbReference>
<dbReference type="InterPro" id="IPR011989">
    <property type="entry name" value="ARM-like"/>
</dbReference>
<dbReference type="InterPro" id="IPR016024">
    <property type="entry name" value="ARM-type_fold"/>
</dbReference>
<dbReference type="InterPro" id="IPR050693">
    <property type="entry name" value="Hsp70_NEF-Inhibitors"/>
</dbReference>
<dbReference type="InterPro" id="IPR013918">
    <property type="entry name" value="Nucleotide_exch_fac_Fes1"/>
</dbReference>
<dbReference type="PANTHER" id="PTHR19316:SF18">
    <property type="entry name" value="HSP70-BINDING PROTEIN 1"/>
    <property type="match status" value="1"/>
</dbReference>
<dbReference type="PANTHER" id="PTHR19316">
    <property type="entry name" value="PROTEIN FOLDING REGULATOR"/>
    <property type="match status" value="1"/>
</dbReference>
<dbReference type="Pfam" id="PF08609">
    <property type="entry name" value="Fes1"/>
    <property type="match status" value="1"/>
</dbReference>
<dbReference type="SUPFAM" id="SSF48371">
    <property type="entry name" value="ARM repeat"/>
    <property type="match status" value="1"/>
</dbReference>